<accession>Q4KMP7</accession>
<accession>B9A6L0</accession>
<accession>Q6IN54</accession>
<accession>Q6P530</accession>
<accession>Q71RG7</accession>
<accession>Q86VC5</accession>
<accession>Q9H8Z2</accession>
<accession>Q9NUN6</accession>
<accession>Q9UFP2</accession>
<organism>
    <name type="scientific">Homo sapiens</name>
    <name type="common">Human</name>
    <dbReference type="NCBI Taxonomy" id="9606"/>
    <lineage>
        <taxon>Eukaryota</taxon>
        <taxon>Metazoa</taxon>
        <taxon>Chordata</taxon>
        <taxon>Craniata</taxon>
        <taxon>Vertebrata</taxon>
        <taxon>Euteleostomi</taxon>
        <taxon>Mammalia</taxon>
        <taxon>Eutheria</taxon>
        <taxon>Euarchontoglires</taxon>
        <taxon>Primates</taxon>
        <taxon>Haplorrhini</taxon>
        <taxon>Catarrhini</taxon>
        <taxon>Hominidae</taxon>
        <taxon>Homo</taxon>
    </lineage>
</organism>
<dbReference type="EMBL" id="AL117408">
    <property type="protein sequence ID" value="CAB55908.1"/>
    <property type="molecule type" value="mRNA"/>
</dbReference>
<dbReference type="EMBL" id="AC106782">
    <property type="status" value="NOT_ANNOTATED_CDS"/>
    <property type="molecule type" value="Genomic_DNA"/>
</dbReference>
<dbReference type="EMBL" id="CH471192">
    <property type="protein sequence ID" value="EAW52256.1"/>
    <property type="status" value="ALT_SEQ"/>
    <property type="molecule type" value="Genomic_DNA"/>
</dbReference>
<dbReference type="EMBL" id="AK002101">
    <property type="protein sequence ID" value="BAA92086.1"/>
    <property type="status" value="ALT_INIT"/>
    <property type="molecule type" value="mRNA"/>
</dbReference>
<dbReference type="EMBL" id="AK023192">
    <property type="protein sequence ID" value="BAB14454.1"/>
    <property type="status" value="ALT_INIT"/>
    <property type="molecule type" value="mRNA"/>
</dbReference>
<dbReference type="EMBL" id="BC050523">
    <property type="protein sequence ID" value="AAH50523.2"/>
    <property type="status" value="ALT_INIT"/>
    <property type="molecule type" value="mRNA"/>
</dbReference>
<dbReference type="EMBL" id="BC063112">
    <property type="protein sequence ID" value="AAH63112.1"/>
    <property type="status" value="ALT_INIT"/>
    <property type="molecule type" value="mRNA"/>
</dbReference>
<dbReference type="EMBL" id="BC072453">
    <property type="protein sequence ID" value="AAH72453.2"/>
    <property type="status" value="ALT_INIT"/>
    <property type="molecule type" value="mRNA"/>
</dbReference>
<dbReference type="EMBL" id="BC093814">
    <property type="protein sequence ID" value="AAH93814.1"/>
    <property type="status" value="ALT_INIT"/>
    <property type="molecule type" value="mRNA"/>
</dbReference>
<dbReference type="EMBL" id="BC093816">
    <property type="protein sequence ID" value="AAH93816.1"/>
    <property type="status" value="ALT_INIT"/>
    <property type="molecule type" value="mRNA"/>
</dbReference>
<dbReference type="EMBL" id="BC098419">
    <property type="protein sequence ID" value="AAH98419.1"/>
    <property type="status" value="ALT_INIT"/>
    <property type="molecule type" value="mRNA"/>
</dbReference>
<dbReference type="EMBL" id="AB449895">
    <property type="protein sequence ID" value="BAH16638.1"/>
    <property type="status" value="ALT_SEQ"/>
    <property type="molecule type" value="mRNA"/>
</dbReference>
<dbReference type="EMBL" id="AF370370">
    <property type="protein sequence ID" value="AAQ15206.1"/>
    <property type="status" value="ALT_FRAME"/>
    <property type="molecule type" value="mRNA"/>
</dbReference>
<dbReference type="CCDS" id="CCDS10676.2">
    <molecule id="Q4KMP7-1"/>
</dbReference>
<dbReference type="PIR" id="T17218">
    <property type="entry name" value="T17218"/>
</dbReference>
<dbReference type="RefSeq" id="NP_056342.3">
    <molecule id="Q4KMP7-1"/>
    <property type="nucleotide sequence ID" value="NM_015527.3"/>
</dbReference>
<dbReference type="SMR" id="Q4KMP7"/>
<dbReference type="BioGRID" id="117476">
    <property type="interactions" value="111"/>
</dbReference>
<dbReference type="FunCoup" id="Q4KMP7">
    <property type="interactions" value="1325"/>
</dbReference>
<dbReference type="IntAct" id="Q4KMP7">
    <property type="interactions" value="29"/>
</dbReference>
<dbReference type="MINT" id="Q4KMP7"/>
<dbReference type="STRING" id="9606.ENSP00000386538"/>
<dbReference type="GlyCosmos" id="Q4KMP7">
    <property type="glycosylation" value="6 sites, 1 glycan"/>
</dbReference>
<dbReference type="GlyGen" id="Q4KMP7">
    <property type="glycosylation" value="10 sites, 1 O-linked glycan (9 sites)"/>
</dbReference>
<dbReference type="iPTMnet" id="Q4KMP7"/>
<dbReference type="PhosphoSitePlus" id="Q4KMP7"/>
<dbReference type="BioMuta" id="TBC1D10B"/>
<dbReference type="DMDM" id="294862492"/>
<dbReference type="jPOST" id="Q4KMP7"/>
<dbReference type="MassIVE" id="Q4KMP7"/>
<dbReference type="PaxDb" id="9606-ENSP00000386538"/>
<dbReference type="PeptideAtlas" id="Q4KMP7"/>
<dbReference type="ProteomicsDB" id="62197">
    <molecule id="Q4KMP7-1"/>
</dbReference>
<dbReference type="ProteomicsDB" id="62198">
    <molecule id="Q4KMP7-2"/>
</dbReference>
<dbReference type="Pumba" id="Q4KMP7"/>
<dbReference type="Antibodypedia" id="27194">
    <property type="antibodies" value="104 antibodies from 21 providers"/>
</dbReference>
<dbReference type="DNASU" id="26000"/>
<dbReference type="Ensembl" id="ENST00000409939.8">
    <molecule id="Q4KMP7-1"/>
    <property type="protein sequence ID" value="ENSP00000386538.3"/>
    <property type="gene ID" value="ENSG00000169221.14"/>
</dbReference>
<dbReference type="GeneID" id="26000"/>
<dbReference type="KEGG" id="hsa:26000"/>
<dbReference type="MANE-Select" id="ENST00000409939.8">
    <property type="protein sequence ID" value="ENSP00000386538.3"/>
    <property type="RefSeq nucleotide sequence ID" value="NM_015527.4"/>
    <property type="RefSeq protein sequence ID" value="NP_056342.3"/>
</dbReference>
<dbReference type="UCSC" id="uc002dxu.3">
    <molecule id="Q4KMP7-1"/>
    <property type="organism name" value="human"/>
</dbReference>
<dbReference type="AGR" id="HGNC:24510"/>
<dbReference type="CTD" id="26000"/>
<dbReference type="DisGeNET" id="26000"/>
<dbReference type="GeneCards" id="TBC1D10B"/>
<dbReference type="HGNC" id="HGNC:24510">
    <property type="gene designation" value="TBC1D10B"/>
</dbReference>
<dbReference type="HPA" id="ENSG00000169221">
    <property type="expression patterns" value="Low tissue specificity"/>
</dbReference>
<dbReference type="MIM" id="613620">
    <property type="type" value="gene"/>
</dbReference>
<dbReference type="neXtProt" id="NX_Q4KMP7"/>
<dbReference type="OpenTargets" id="ENSG00000169221"/>
<dbReference type="PharmGKB" id="PA142670835"/>
<dbReference type="VEuPathDB" id="HostDB:ENSG00000169221"/>
<dbReference type="eggNOG" id="KOG2221">
    <property type="taxonomic scope" value="Eukaryota"/>
</dbReference>
<dbReference type="GeneTree" id="ENSGT00940000159805"/>
<dbReference type="HOGENOM" id="CLU_005350_8_0_1"/>
<dbReference type="InParanoid" id="Q4KMP7"/>
<dbReference type="OMA" id="AIHEERH"/>
<dbReference type="OrthoDB" id="159449at2759"/>
<dbReference type="PAN-GO" id="Q4KMP7">
    <property type="GO annotations" value="2 GO annotations based on evolutionary models"/>
</dbReference>
<dbReference type="PhylomeDB" id="Q4KMP7"/>
<dbReference type="TreeFam" id="TF313293"/>
<dbReference type="PathwayCommons" id="Q4KMP7"/>
<dbReference type="Reactome" id="R-HSA-8854214">
    <property type="pathway name" value="TBC/RABGAPs"/>
</dbReference>
<dbReference type="SignaLink" id="Q4KMP7"/>
<dbReference type="BioGRID-ORCS" id="26000">
    <property type="hits" value="53 hits in 1161 CRISPR screens"/>
</dbReference>
<dbReference type="ChiTaRS" id="TBC1D10B">
    <property type="organism name" value="human"/>
</dbReference>
<dbReference type="GenomeRNAi" id="26000"/>
<dbReference type="Pharos" id="Q4KMP7">
    <property type="development level" value="Tbio"/>
</dbReference>
<dbReference type="PRO" id="PR:Q4KMP7"/>
<dbReference type="Proteomes" id="UP000005640">
    <property type="component" value="Chromosome 16"/>
</dbReference>
<dbReference type="RNAct" id="Q4KMP7">
    <property type="molecule type" value="protein"/>
</dbReference>
<dbReference type="Bgee" id="ENSG00000169221">
    <property type="expression patterns" value="Expressed in left testis and 182 other cell types or tissues"/>
</dbReference>
<dbReference type="ExpressionAtlas" id="Q4KMP7">
    <property type="expression patterns" value="baseline and differential"/>
</dbReference>
<dbReference type="GO" id="GO:0005829">
    <property type="term" value="C:cytosol"/>
    <property type="evidence" value="ECO:0007669"/>
    <property type="project" value="GOC"/>
</dbReference>
<dbReference type="GO" id="GO:0005886">
    <property type="term" value="C:plasma membrane"/>
    <property type="evidence" value="ECO:0000314"/>
    <property type="project" value="UniProtKB"/>
</dbReference>
<dbReference type="GO" id="GO:0005096">
    <property type="term" value="F:GTPase activator activity"/>
    <property type="evidence" value="ECO:0000314"/>
    <property type="project" value="UniProtKB"/>
</dbReference>
<dbReference type="GO" id="GO:0043087">
    <property type="term" value="P:regulation of GTPase activity"/>
    <property type="evidence" value="ECO:0000314"/>
    <property type="project" value="UniProtKB"/>
</dbReference>
<dbReference type="GO" id="GO:0042147">
    <property type="term" value="P:retrograde transport, endosome to Golgi"/>
    <property type="evidence" value="ECO:0000315"/>
    <property type="project" value="UniProtKB"/>
</dbReference>
<dbReference type="FunFam" id="1.10.10.750:FF:000001">
    <property type="entry name" value="TBC1 domain family member 10A"/>
    <property type="match status" value="1"/>
</dbReference>
<dbReference type="FunFam" id="1.10.472.80:FF:000008">
    <property type="entry name" value="TBC1 domain family member 10A"/>
    <property type="match status" value="1"/>
</dbReference>
<dbReference type="FunFam" id="1.10.8.270:FF:000007">
    <property type="entry name" value="TBC1 domain family member 10A"/>
    <property type="match status" value="1"/>
</dbReference>
<dbReference type="Gene3D" id="1.10.8.270">
    <property type="entry name" value="putative rabgap domain of human tbc1 domain family member 14 like domains"/>
    <property type="match status" value="1"/>
</dbReference>
<dbReference type="Gene3D" id="1.10.10.750">
    <property type="entry name" value="Ypt/Rab-GAP domain of gyp1p, domain 1"/>
    <property type="match status" value="1"/>
</dbReference>
<dbReference type="Gene3D" id="1.10.472.80">
    <property type="entry name" value="Ypt/Rab-GAP domain of gyp1p, domain 3"/>
    <property type="match status" value="1"/>
</dbReference>
<dbReference type="InterPro" id="IPR000195">
    <property type="entry name" value="Rab-GAP-TBC_dom"/>
</dbReference>
<dbReference type="InterPro" id="IPR035969">
    <property type="entry name" value="Rab-GAP_TBC_sf"/>
</dbReference>
<dbReference type="InterPro" id="IPR050302">
    <property type="entry name" value="Rab_GAP_TBC_domain"/>
</dbReference>
<dbReference type="PANTHER" id="PTHR47219">
    <property type="entry name" value="RAB GTPASE-ACTIVATING PROTEIN 1-LIKE"/>
    <property type="match status" value="1"/>
</dbReference>
<dbReference type="PANTHER" id="PTHR47219:SF17">
    <property type="entry name" value="TBC1 DOMAIN FAMILY MEMBER 10B"/>
    <property type="match status" value="1"/>
</dbReference>
<dbReference type="Pfam" id="PF00566">
    <property type="entry name" value="RabGAP-TBC"/>
    <property type="match status" value="1"/>
</dbReference>
<dbReference type="PRINTS" id="PR01217">
    <property type="entry name" value="PRICHEXTENSN"/>
</dbReference>
<dbReference type="SMART" id="SM00164">
    <property type="entry name" value="TBC"/>
    <property type="match status" value="1"/>
</dbReference>
<dbReference type="SUPFAM" id="SSF47923">
    <property type="entry name" value="Ypt/Rab-GAP domain of gyp1p"/>
    <property type="match status" value="2"/>
</dbReference>
<dbReference type="PROSITE" id="PS50086">
    <property type="entry name" value="TBC_RABGAP"/>
    <property type="match status" value="1"/>
</dbReference>
<evidence type="ECO:0000250" key="1">
    <source>
        <dbReference type="UniProtKB" id="Q8BHL3"/>
    </source>
</evidence>
<evidence type="ECO:0000255" key="2"/>
<evidence type="ECO:0000255" key="3">
    <source>
        <dbReference type="PROSITE-ProRule" id="PRU00163"/>
    </source>
</evidence>
<evidence type="ECO:0000256" key="4">
    <source>
        <dbReference type="SAM" id="MobiDB-lite"/>
    </source>
</evidence>
<evidence type="ECO:0000269" key="5">
    <source>
    </source>
</evidence>
<evidence type="ECO:0000269" key="6">
    <source>
    </source>
</evidence>
<evidence type="ECO:0000303" key="7">
    <source>
    </source>
</evidence>
<evidence type="ECO:0000305" key="8"/>
<evidence type="ECO:0007744" key="9">
    <source>
    </source>
</evidence>
<evidence type="ECO:0007744" key="10">
    <source>
    </source>
</evidence>
<evidence type="ECO:0007744" key="11">
    <source>
    </source>
</evidence>
<evidence type="ECO:0007744" key="12">
    <source>
    </source>
</evidence>
<evidence type="ECO:0007744" key="13">
    <source>
    </source>
</evidence>
<evidence type="ECO:0007744" key="14">
    <source>
    </source>
</evidence>
<evidence type="ECO:0007744" key="15">
    <source>
    </source>
</evidence>
<name>TB10B_HUMAN</name>
<keyword id="KW-0025">Alternative splicing</keyword>
<keyword id="KW-1003">Cell membrane</keyword>
<keyword id="KW-0175">Coiled coil</keyword>
<keyword id="KW-0963">Cytoplasm</keyword>
<keyword id="KW-0343">GTPase activation</keyword>
<keyword id="KW-0472">Membrane</keyword>
<keyword id="KW-0488">Methylation</keyword>
<keyword id="KW-0597">Phosphoprotein</keyword>
<keyword id="KW-1267">Proteomics identification</keyword>
<keyword id="KW-1185">Reference proteome</keyword>
<protein>
    <recommendedName>
        <fullName>TBC1 domain family member 10B</fullName>
    </recommendedName>
    <alternativeName>
        <fullName>Rab27A-GAP-beta</fullName>
    </alternativeName>
</protein>
<comment type="function">
    <text evidence="5 6">Acts as a GTPase-activating protein for RAB3A, RAB22A, RAB27A, and RAB35. Does not act on RAB2A and RAB6A.</text>
</comment>
<comment type="interaction">
    <interactant intactId="EBI-4402442">
        <id>Q4KMP7</id>
    </interactant>
    <interactant intactId="EBI-6873045">
        <id>Q6NSX1</id>
        <label>CCDC70</label>
    </interactant>
    <organismsDiffer>false</organismsDiffer>
    <experiments>3</experiments>
</comment>
<comment type="subcellular location">
    <subcellularLocation>
        <location evidence="5">Cytoplasm</location>
    </subcellularLocation>
    <subcellularLocation>
        <location evidence="6">Cell membrane</location>
    </subcellularLocation>
    <text evidence="5">Predominantly localizes near the plasma membrane (PubMed:16923811). In melanocytes, located at the periphery of cells (PubMed:16923811).</text>
</comment>
<comment type="alternative products">
    <event type="alternative splicing"/>
    <isoform>
        <id>Q4KMP7-1</id>
        <name>1</name>
        <sequence type="displayed"/>
    </isoform>
    <isoform>
        <id>Q4KMP7-2</id>
        <name>2</name>
        <sequence type="described" ref="VSP_030670"/>
    </isoform>
</comment>
<comment type="sequence caution" evidence="8">
    <conflict type="erroneous initiation">
        <sequence resource="EMBL-CDS" id="AAH50523"/>
    </conflict>
    <text>Truncated N-terminus.</text>
</comment>
<comment type="sequence caution" evidence="8">
    <conflict type="erroneous initiation">
        <sequence resource="EMBL-CDS" id="AAH63112"/>
    </conflict>
    <text>Truncated N-terminus.</text>
</comment>
<comment type="sequence caution" evidence="8">
    <conflict type="erroneous initiation">
        <sequence resource="EMBL-CDS" id="AAH72453"/>
    </conflict>
    <text>Truncated N-terminus.</text>
</comment>
<comment type="sequence caution" evidence="8">
    <conflict type="erroneous initiation">
        <sequence resource="EMBL-CDS" id="AAH93814"/>
    </conflict>
    <text>Truncated N-terminus.</text>
</comment>
<comment type="sequence caution" evidence="8">
    <conflict type="erroneous initiation">
        <sequence resource="EMBL-CDS" id="AAH93816"/>
    </conflict>
    <text>Truncated N-terminus.</text>
</comment>
<comment type="sequence caution" evidence="8">
    <conflict type="erroneous initiation">
        <sequence resource="EMBL-CDS" id="AAH98419"/>
    </conflict>
    <text>Truncated N-terminus.</text>
</comment>
<comment type="sequence caution" evidence="8">
    <conflict type="frameshift">
        <sequence resource="EMBL-CDS" id="AAQ15206"/>
    </conflict>
</comment>
<comment type="sequence caution" evidence="8">
    <conflict type="erroneous initiation">
        <sequence resource="EMBL-CDS" id="BAA92086"/>
    </conflict>
    <text>Truncated N-terminus.</text>
</comment>
<comment type="sequence caution" evidence="8">
    <conflict type="erroneous initiation">
        <sequence resource="EMBL-CDS" id="BAB14454"/>
    </conflict>
    <text>Truncated N-terminus.</text>
</comment>
<comment type="sequence caution" evidence="8">
    <conflict type="miscellaneous discrepancy">
        <sequence resource="EMBL-CDS" id="BAH16638"/>
    </conflict>
    <text>Probable cloning artifact.</text>
</comment>
<comment type="sequence caution" evidence="8">
    <conflict type="erroneous gene model prediction">
        <sequence resource="EMBL-CDS" id="EAW52256"/>
    </conflict>
</comment>
<feature type="chain" id="PRO_0000315716" description="TBC1 domain family member 10B">
    <location>
        <begin position="1"/>
        <end position="808"/>
    </location>
</feature>
<feature type="domain" description="Rab-GAP TBC" evidence="3">
    <location>
        <begin position="360"/>
        <end position="548"/>
    </location>
</feature>
<feature type="region of interest" description="Disordered" evidence="4">
    <location>
        <begin position="1"/>
        <end position="38"/>
    </location>
</feature>
<feature type="region of interest" description="Disordered" evidence="4">
    <location>
        <begin position="60"/>
        <end position="225"/>
    </location>
</feature>
<feature type="region of interest" description="Disordered" evidence="4">
    <location>
        <begin position="237"/>
        <end position="264"/>
    </location>
</feature>
<feature type="region of interest" description="Disordered" evidence="4">
    <location>
        <begin position="629"/>
        <end position="808"/>
    </location>
</feature>
<feature type="coiled-coil region" evidence="2">
    <location>
        <begin position="716"/>
        <end position="782"/>
    </location>
</feature>
<feature type="compositionally biased region" description="Low complexity" evidence="4">
    <location>
        <begin position="27"/>
        <end position="38"/>
    </location>
</feature>
<feature type="compositionally biased region" description="Pro residues" evidence="4">
    <location>
        <begin position="100"/>
        <end position="112"/>
    </location>
</feature>
<feature type="compositionally biased region" description="Low complexity" evidence="4">
    <location>
        <begin position="149"/>
        <end position="178"/>
    </location>
</feature>
<feature type="compositionally biased region" description="Polar residues" evidence="4">
    <location>
        <begin position="179"/>
        <end position="189"/>
    </location>
</feature>
<feature type="compositionally biased region" description="Low complexity" evidence="4">
    <location>
        <begin position="198"/>
        <end position="209"/>
    </location>
</feature>
<feature type="compositionally biased region" description="Polar residues" evidence="4">
    <location>
        <begin position="242"/>
        <end position="252"/>
    </location>
</feature>
<feature type="compositionally biased region" description="Low complexity" evidence="4">
    <location>
        <begin position="655"/>
        <end position="676"/>
    </location>
</feature>
<feature type="compositionally biased region" description="Low complexity" evidence="4">
    <location>
        <begin position="684"/>
        <end position="696"/>
    </location>
</feature>
<feature type="compositionally biased region" description="Polar residues" evidence="4">
    <location>
        <begin position="707"/>
        <end position="718"/>
    </location>
</feature>
<feature type="compositionally biased region" description="Basic and acidic residues" evidence="4">
    <location>
        <begin position="719"/>
        <end position="774"/>
    </location>
</feature>
<feature type="compositionally biased region" description="Basic and acidic residues" evidence="4">
    <location>
        <begin position="793"/>
        <end position="808"/>
    </location>
</feature>
<feature type="modified residue" description="Phosphoserine" evidence="15">
    <location>
        <position position="22"/>
    </location>
</feature>
<feature type="modified residue" description="Phosphoserine" evidence="1">
    <location>
        <position position="141"/>
    </location>
</feature>
<feature type="modified residue" description="Phosphothreonine" evidence="1">
    <location>
        <position position="152"/>
    </location>
</feature>
<feature type="modified residue" description="Omega-N-methylarginine" evidence="1">
    <location>
        <position position="186"/>
    </location>
</feature>
<feature type="modified residue" description="Phosphoserine" evidence="11 12 14">
    <location>
        <position position="658"/>
    </location>
</feature>
<feature type="modified residue" description="Phosphoserine" evidence="11 12 13">
    <location>
        <position position="661"/>
    </location>
</feature>
<feature type="modified residue" description="Phosphoserine" evidence="9 10 14 15">
    <location>
        <position position="678"/>
    </location>
</feature>
<feature type="modified residue" description="Phosphoserine" evidence="11 12 13 14 15">
    <location>
        <position position="687"/>
    </location>
</feature>
<feature type="splice variant" id="VSP_030670" description="In isoform 2." evidence="7">
    <location>
        <begin position="1"/>
        <end position="575"/>
    </location>
</feature>
<feature type="mutagenesis site" description="Loss of GAP activity. Unable to exclude RAB3A from the dense-core vesicles, when tested in a pheochromocytoma cell line." evidence="6">
    <original>R</original>
    <variation>L</variation>
    <location>
        <position position="409"/>
    </location>
</feature>
<feature type="sequence conflict" description="In Ref. 5; AAH50523." evidence="8" ref="5">
    <original>S</original>
    <variation>G</variation>
    <location>
        <position position="187"/>
    </location>
</feature>
<feature type="sequence conflict" description="In Ref. 7; AAQ15206." evidence="8" ref="7">
    <original>F</original>
    <variation>L</variation>
    <location>
        <position position="350"/>
    </location>
</feature>
<feature type="sequence conflict" description="In Ref. 6; BAH16638." evidence="8" ref="6">
    <original>G</original>
    <variation>D</variation>
    <location>
        <position position="669"/>
    </location>
</feature>
<feature type="sequence conflict" description="In Ref. 6; BAH16638." evidence="8" ref="6">
    <original>P</original>
    <variation>S</variation>
    <location>
        <position position="690"/>
    </location>
</feature>
<feature type="sequence conflict" description="In Ref. 5; AAH50523/AAH63112." evidence="8" ref="5">
    <original>E</original>
    <variation>G</variation>
    <location>
        <position position="761"/>
    </location>
</feature>
<proteinExistence type="evidence at protein level"/>
<reference key="1">
    <citation type="journal article" date="2007" name="BMC Genomics">
        <title>The full-ORF clone resource of the German cDNA consortium.</title>
        <authorList>
            <person name="Bechtel S."/>
            <person name="Rosenfelder H."/>
            <person name="Duda A."/>
            <person name="Schmidt C.P."/>
            <person name="Ernst U."/>
            <person name="Wellenreuther R."/>
            <person name="Mehrle A."/>
            <person name="Schuster C."/>
            <person name="Bahr A."/>
            <person name="Bloecker H."/>
            <person name="Heubner D."/>
            <person name="Hoerlein A."/>
            <person name="Michel G."/>
            <person name="Wedler H."/>
            <person name="Koehrer K."/>
            <person name="Ottenwaelder B."/>
            <person name="Poustka A."/>
            <person name="Wiemann S."/>
            <person name="Schupp I."/>
        </authorList>
    </citation>
    <scope>NUCLEOTIDE SEQUENCE [LARGE SCALE MRNA] (ISOFORM 2)</scope>
    <source>
        <tissue>Testis</tissue>
    </source>
</reference>
<reference key="2">
    <citation type="journal article" date="2004" name="Nature">
        <title>The sequence and analysis of duplication-rich human chromosome 16.</title>
        <authorList>
            <person name="Martin J."/>
            <person name="Han C."/>
            <person name="Gordon L.A."/>
            <person name="Terry A."/>
            <person name="Prabhakar S."/>
            <person name="She X."/>
            <person name="Xie G."/>
            <person name="Hellsten U."/>
            <person name="Chan Y.M."/>
            <person name="Altherr M."/>
            <person name="Couronne O."/>
            <person name="Aerts A."/>
            <person name="Bajorek E."/>
            <person name="Black S."/>
            <person name="Blumer H."/>
            <person name="Branscomb E."/>
            <person name="Brown N.C."/>
            <person name="Bruno W.J."/>
            <person name="Buckingham J.M."/>
            <person name="Callen D.F."/>
            <person name="Campbell C.S."/>
            <person name="Campbell M.L."/>
            <person name="Campbell E.W."/>
            <person name="Caoile C."/>
            <person name="Challacombe J.F."/>
            <person name="Chasteen L.A."/>
            <person name="Chertkov O."/>
            <person name="Chi H.C."/>
            <person name="Christensen M."/>
            <person name="Clark L.M."/>
            <person name="Cohn J.D."/>
            <person name="Denys M."/>
            <person name="Detter J.C."/>
            <person name="Dickson M."/>
            <person name="Dimitrijevic-Bussod M."/>
            <person name="Escobar J."/>
            <person name="Fawcett J.J."/>
            <person name="Flowers D."/>
            <person name="Fotopulos D."/>
            <person name="Glavina T."/>
            <person name="Gomez M."/>
            <person name="Gonzales E."/>
            <person name="Goodstein D."/>
            <person name="Goodwin L.A."/>
            <person name="Grady D.L."/>
            <person name="Grigoriev I."/>
            <person name="Groza M."/>
            <person name="Hammon N."/>
            <person name="Hawkins T."/>
            <person name="Haydu L."/>
            <person name="Hildebrand C.E."/>
            <person name="Huang W."/>
            <person name="Israni S."/>
            <person name="Jett J."/>
            <person name="Jewett P.B."/>
            <person name="Kadner K."/>
            <person name="Kimball H."/>
            <person name="Kobayashi A."/>
            <person name="Krawczyk M.-C."/>
            <person name="Leyba T."/>
            <person name="Longmire J.L."/>
            <person name="Lopez F."/>
            <person name="Lou Y."/>
            <person name="Lowry S."/>
            <person name="Ludeman T."/>
            <person name="Manohar C.F."/>
            <person name="Mark G.A."/>
            <person name="McMurray K.L."/>
            <person name="Meincke L.J."/>
            <person name="Morgan J."/>
            <person name="Moyzis R.K."/>
            <person name="Mundt M.O."/>
            <person name="Munk A.C."/>
            <person name="Nandkeshwar R.D."/>
            <person name="Pitluck S."/>
            <person name="Pollard M."/>
            <person name="Predki P."/>
            <person name="Parson-Quintana B."/>
            <person name="Ramirez L."/>
            <person name="Rash S."/>
            <person name="Retterer J."/>
            <person name="Ricke D.O."/>
            <person name="Robinson D.L."/>
            <person name="Rodriguez A."/>
            <person name="Salamov A."/>
            <person name="Saunders E.H."/>
            <person name="Scott D."/>
            <person name="Shough T."/>
            <person name="Stallings R.L."/>
            <person name="Stalvey M."/>
            <person name="Sutherland R.D."/>
            <person name="Tapia R."/>
            <person name="Tesmer J.G."/>
            <person name="Thayer N."/>
            <person name="Thompson L.S."/>
            <person name="Tice H."/>
            <person name="Torney D.C."/>
            <person name="Tran-Gyamfi M."/>
            <person name="Tsai M."/>
            <person name="Ulanovsky L.E."/>
            <person name="Ustaszewska A."/>
            <person name="Vo N."/>
            <person name="White P.S."/>
            <person name="Williams A.L."/>
            <person name="Wills P.L."/>
            <person name="Wu J.-R."/>
            <person name="Wu K."/>
            <person name="Yang J."/>
            <person name="DeJong P."/>
            <person name="Bruce D."/>
            <person name="Doggett N.A."/>
            <person name="Deaven L."/>
            <person name="Schmutz J."/>
            <person name="Grimwood J."/>
            <person name="Richardson P."/>
            <person name="Rokhsar D.S."/>
            <person name="Eichler E.E."/>
            <person name="Gilna P."/>
            <person name="Lucas S.M."/>
            <person name="Myers R.M."/>
            <person name="Rubin E.M."/>
            <person name="Pennacchio L.A."/>
        </authorList>
    </citation>
    <scope>NUCLEOTIDE SEQUENCE [LARGE SCALE GENOMIC DNA]</scope>
</reference>
<reference key="3">
    <citation type="submission" date="2005-07" db="EMBL/GenBank/DDBJ databases">
        <authorList>
            <person name="Mural R.J."/>
            <person name="Istrail S."/>
            <person name="Sutton G.G."/>
            <person name="Florea L."/>
            <person name="Halpern A.L."/>
            <person name="Mobarry C.M."/>
            <person name="Lippert R."/>
            <person name="Walenz B."/>
            <person name="Shatkay H."/>
            <person name="Dew I."/>
            <person name="Miller J.R."/>
            <person name="Flanigan M.J."/>
            <person name="Edwards N.J."/>
            <person name="Bolanos R."/>
            <person name="Fasulo D."/>
            <person name="Halldorsson B.V."/>
            <person name="Hannenhalli S."/>
            <person name="Turner R."/>
            <person name="Yooseph S."/>
            <person name="Lu F."/>
            <person name="Nusskern D.R."/>
            <person name="Shue B.C."/>
            <person name="Zheng X.H."/>
            <person name="Zhong F."/>
            <person name="Delcher A.L."/>
            <person name="Huson D.H."/>
            <person name="Kravitz S.A."/>
            <person name="Mouchard L."/>
            <person name="Reinert K."/>
            <person name="Remington K.A."/>
            <person name="Clark A.G."/>
            <person name="Waterman M.S."/>
            <person name="Eichler E.E."/>
            <person name="Adams M.D."/>
            <person name="Hunkapiller M.W."/>
            <person name="Myers E.W."/>
            <person name="Venter J.C."/>
        </authorList>
    </citation>
    <scope>NUCLEOTIDE SEQUENCE [LARGE SCALE GENOMIC DNA]</scope>
</reference>
<reference key="4">
    <citation type="journal article" date="2004" name="Nat. Genet.">
        <title>Complete sequencing and characterization of 21,243 full-length human cDNAs.</title>
        <authorList>
            <person name="Ota T."/>
            <person name="Suzuki Y."/>
            <person name="Nishikawa T."/>
            <person name="Otsuki T."/>
            <person name="Sugiyama T."/>
            <person name="Irie R."/>
            <person name="Wakamatsu A."/>
            <person name="Hayashi K."/>
            <person name="Sato H."/>
            <person name="Nagai K."/>
            <person name="Kimura K."/>
            <person name="Makita H."/>
            <person name="Sekine M."/>
            <person name="Obayashi M."/>
            <person name="Nishi T."/>
            <person name="Shibahara T."/>
            <person name="Tanaka T."/>
            <person name="Ishii S."/>
            <person name="Yamamoto J."/>
            <person name="Saito K."/>
            <person name="Kawai Y."/>
            <person name="Isono Y."/>
            <person name="Nakamura Y."/>
            <person name="Nagahari K."/>
            <person name="Murakami K."/>
            <person name="Yasuda T."/>
            <person name="Iwayanagi T."/>
            <person name="Wagatsuma M."/>
            <person name="Shiratori A."/>
            <person name="Sudo H."/>
            <person name="Hosoiri T."/>
            <person name="Kaku Y."/>
            <person name="Kodaira H."/>
            <person name="Kondo H."/>
            <person name="Sugawara M."/>
            <person name="Takahashi M."/>
            <person name="Kanda K."/>
            <person name="Yokoi T."/>
            <person name="Furuya T."/>
            <person name="Kikkawa E."/>
            <person name="Omura Y."/>
            <person name="Abe K."/>
            <person name="Kamihara K."/>
            <person name="Katsuta N."/>
            <person name="Sato K."/>
            <person name="Tanikawa M."/>
            <person name="Yamazaki M."/>
            <person name="Ninomiya K."/>
            <person name="Ishibashi T."/>
            <person name="Yamashita H."/>
            <person name="Murakawa K."/>
            <person name="Fujimori K."/>
            <person name="Tanai H."/>
            <person name="Kimata M."/>
            <person name="Watanabe M."/>
            <person name="Hiraoka S."/>
            <person name="Chiba Y."/>
            <person name="Ishida S."/>
            <person name="Ono Y."/>
            <person name="Takiguchi S."/>
            <person name="Watanabe S."/>
            <person name="Yosida M."/>
            <person name="Hotuta T."/>
            <person name="Kusano J."/>
            <person name="Kanehori K."/>
            <person name="Takahashi-Fujii A."/>
            <person name="Hara H."/>
            <person name="Tanase T.-O."/>
            <person name="Nomura Y."/>
            <person name="Togiya S."/>
            <person name="Komai F."/>
            <person name="Hara R."/>
            <person name="Takeuchi K."/>
            <person name="Arita M."/>
            <person name="Imose N."/>
            <person name="Musashino K."/>
            <person name="Yuuki H."/>
            <person name="Oshima A."/>
            <person name="Sasaki N."/>
            <person name="Aotsuka S."/>
            <person name="Yoshikawa Y."/>
            <person name="Matsunawa H."/>
            <person name="Ichihara T."/>
            <person name="Shiohata N."/>
            <person name="Sano S."/>
            <person name="Moriya S."/>
            <person name="Momiyama H."/>
            <person name="Satoh N."/>
            <person name="Takami S."/>
            <person name="Terashima Y."/>
            <person name="Suzuki O."/>
            <person name="Nakagawa S."/>
            <person name="Senoh A."/>
            <person name="Mizoguchi H."/>
            <person name="Goto Y."/>
            <person name="Shimizu F."/>
            <person name="Wakebe H."/>
            <person name="Hishigaki H."/>
            <person name="Watanabe T."/>
            <person name="Sugiyama A."/>
            <person name="Takemoto M."/>
            <person name="Kawakami B."/>
            <person name="Yamazaki M."/>
            <person name="Watanabe K."/>
            <person name="Kumagai A."/>
            <person name="Itakura S."/>
            <person name="Fukuzumi Y."/>
            <person name="Fujimori Y."/>
            <person name="Komiyama M."/>
            <person name="Tashiro H."/>
            <person name="Tanigami A."/>
            <person name="Fujiwara T."/>
            <person name="Ono T."/>
            <person name="Yamada K."/>
            <person name="Fujii Y."/>
            <person name="Ozaki K."/>
            <person name="Hirao M."/>
            <person name="Ohmori Y."/>
            <person name="Kawabata A."/>
            <person name="Hikiji T."/>
            <person name="Kobatake N."/>
            <person name="Inagaki H."/>
            <person name="Ikema Y."/>
            <person name="Okamoto S."/>
            <person name="Okitani R."/>
            <person name="Kawakami T."/>
            <person name="Noguchi S."/>
            <person name="Itoh T."/>
            <person name="Shigeta K."/>
            <person name="Senba T."/>
            <person name="Matsumura K."/>
            <person name="Nakajima Y."/>
            <person name="Mizuno T."/>
            <person name="Morinaga M."/>
            <person name="Sasaki M."/>
            <person name="Togashi T."/>
            <person name="Oyama M."/>
            <person name="Hata H."/>
            <person name="Watanabe M."/>
            <person name="Komatsu T."/>
            <person name="Mizushima-Sugano J."/>
            <person name="Satoh T."/>
            <person name="Shirai Y."/>
            <person name="Takahashi Y."/>
            <person name="Nakagawa K."/>
            <person name="Okumura K."/>
            <person name="Nagase T."/>
            <person name="Nomura N."/>
            <person name="Kikuchi H."/>
            <person name="Masuho Y."/>
            <person name="Yamashita R."/>
            <person name="Nakai K."/>
            <person name="Yada T."/>
            <person name="Nakamura Y."/>
            <person name="Ohara O."/>
            <person name="Isogai T."/>
            <person name="Sugano S."/>
        </authorList>
    </citation>
    <scope>PARTIAL NUCLEOTIDE SEQUENCE [LARGE SCALE MRNA] (ISOFORM 1)</scope>
    <source>
        <tissue>Placenta</tissue>
        <tissue>Teratocarcinoma</tissue>
    </source>
</reference>
<reference key="5">
    <citation type="journal article" date="2004" name="Genome Res.">
        <title>The status, quality, and expansion of the NIH full-length cDNA project: the Mammalian Gene Collection (MGC).</title>
        <authorList>
            <consortium name="The MGC Project Team"/>
        </authorList>
    </citation>
    <scope>PARTIAL NUCLEOTIDE SEQUENCE [LARGE SCALE MRNA] (ISOFORM 1)</scope>
    <source>
        <tissue>Brain</tissue>
        <tissue>Ovary</tissue>
        <tissue>PNS</tissue>
        <tissue>Uterus</tissue>
    </source>
</reference>
<reference key="6">
    <citation type="journal article" date="2009" name="Genes Cells">
        <title>Identification and characterization of a novel Tre-2/Bub2/Cdc16 (TBC) protein that possesses Rab3A-GAP activity.</title>
        <authorList>
            <person name="Ishibashi K."/>
            <person name="Kanno E."/>
            <person name="Itoh T."/>
            <person name="Fukuda M."/>
        </authorList>
    </citation>
    <scope>NUCLEOTIDE SEQUENCE [MRNA] OF 170-808</scope>
    <scope>FUNCTION</scope>
    <scope>MUTAGENESIS OF ARG-409</scope>
    <scope>SUBCELLULAR LOCATION</scope>
    <source>
        <tissue>Brain</tissue>
    </source>
</reference>
<reference key="7">
    <citation type="journal article" date="2004" name="Proc. Natl. Acad. Sci. U.S.A.">
        <title>Large-scale cDNA transfection screening for genes related to cancer development and progression.</title>
        <authorList>
            <person name="Wan D."/>
            <person name="Gong Y."/>
            <person name="Qin W."/>
            <person name="Zhang P."/>
            <person name="Li J."/>
            <person name="Wei L."/>
            <person name="Zhou X."/>
            <person name="Li H."/>
            <person name="Qiu X."/>
            <person name="Zhong F."/>
            <person name="He L."/>
            <person name="Yu J."/>
            <person name="Yao G."/>
            <person name="Jiang H."/>
            <person name="Qian L."/>
            <person name="Yu Y."/>
            <person name="Shu H."/>
            <person name="Chen X."/>
            <person name="Xu H."/>
            <person name="Guo M."/>
            <person name="Pan Z."/>
            <person name="Chen Y."/>
            <person name="Ge C."/>
            <person name="Yang S."/>
            <person name="Gu J."/>
        </authorList>
    </citation>
    <scope>NUCLEOTIDE SEQUENCE [LARGE SCALE MRNA] OF 281-808 (ISOFORM 1)</scope>
</reference>
<reference key="8">
    <citation type="journal article" date="2006" name="Cell">
        <title>Global, in vivo, and site-specific phosphorylation dynamics in signaling networks.</title>
        <authorList>
            <person name="Olsen J.V."/>
            <person name="Blagoev B."/>
            <person name="Gnad F."/>
            <person name="Macek B."/>
            <person name="Kumar C."/>
            <person name="Mortensen P."/>
            <person name="Mann M."/>
        </authorList>
    </citation>
    <scope>PHOSPHORYLATION [LARGE SCALE ANALYSIS] AT SER-678</scope>
    <scope>IDENTIFICATION BY MASS SPECTROMETRY [LARGE SCALE ANALYSIS]</scope>
    <source>
        <tissue>Cervix carcinoma</tissue>
    </source>
</reference>
<reference key="9">
    <citation type="journal article" date="2006" name="J. Biol. Chem.">
        <title>Identification of EPI64 as a GTPase-activating protein specific for Rab27A.</title>
        <authorList>
            <person name="Itoh T."/>
            <person name="Fukuda M."/>
        </authorList>
    </citation>
    <scope>FUNCTION</scope>
    <scope>SUBCELLULAR LOCATION</scope>
</reference>
<reference key="10">
    <citation type="journal article" date="2008" name="J. Proteome Res.">
        <title>Combining protein-based IMAC, peptide-based IMAC, and MudPIT for efficient phosphoproteomic analysis.</title>
        <authorList>
            <person name="Cantin G.T."/>
            <person name="Yi W."/>
            <person name="Lu B."/>
            <person name="Park S.K."/>
            <person name="Xu T."/>
            <person name="Lee J.-D."/>
            <person name="Yates J.R. III"/>
        </authorList>
    </citation>
    <scope>PHOSPHORYLATION [LARGE SCALE ANALYSIS] AT SER-678</scope>
    <scope>IDENTIFICATION BY MASS SPECTROMETRY [LARGE SCALE ANALYSIS]</scope>
    <source>
        <tissue>Cervix carcinoma</tissue>
    </source>
</reference>
<reference key="11">
    <citation type="journal article" date="2008" name="Proc. Natl. Acad. Sci. U.S.A.">
        <title>A quantitative atlas of mitotic phosphorylation.</title>
        <authorList>
            <person name="Dephoure N."/>
            <person name="Zhou C."/>
            <person name="Villen J."/>
            <person name="Beausoleil S.A."/>
            <person name="Bakalarski C.E."/>
            <person name="Elledge S.J."/>
            <person name="Gygi S.P."/>
        </authorList>
    </citation>
    <scope>PHOSPHORYLATION [LARGE SCALE ANALYSIS] AT SER-658; SER-661 AND SER-687</scope>
    <scope>IDENTIFICATION BY MASS SPECTROMETRY [LARGE SCALE ANALYSIS]</scope>
    <source>
        <tissue>Cervix carcinoma</tissue>
    </source>
</reference>
<reference key="12">
    <citation type="journal article" date="2009" name="Anal. Chem.">
        <title>Lys-N and trypsin cover complementary parts of the phosphoproteome in a refined SCX-based approach.</title>
        <authorList>
            <person name="Gauci S."/>
            <person name="Helbig A.O."/>
            <person name="Slijper M."/>
            <person name="Krijgsveld J."/>
            <person name="Heck A.J."/>
            <person name="Mohammed S."/>
        </authorList>
    </citation>
    <scope>IDENTIFICATION BY MASS SPECTROMETRY [LARGE SCALE ANALYSIS]</scope>
</reference>
<reference key="13">
    <citation type="journal article" date="2009" name="Sci. Signal.">
        <title>Quantitative phosphoproteomic analysis of T cell receptor signaling reveals system-wide modulation of protein-protein interactions.</title>
        <authorList>
            <person name="Mayya V."/>
            <person name="Lundgren D.H."/>
            <person name="Hwang S.-I."/>
            <person name="Rezaul K."/>
            <person name="Wu L."/>
            <person name="Eng J.K."/>
            <person name="Rodionov V."/>
            <person name="Han D.K."/>
        </authorList>
    </citation>
    <scope>PHOSPHORYLATION [LARGE SCALE ANALYSIS] AT SER-658; SER-661 AND SER-687</scope>
    <scope>IDENTIFICATION BY MASS SPECTROMETRY [LARGE SCALE ANALYSIS]</scope>
    <source>
        <tissue>Leukemic T-cell</tissue>
    </source>
</reference>
<reference key="14">
    <citation type="journal article" date="2010" name="Sci. Signal.">
        <title>Quantitative phosphoproteomics reveals widespread full phosphorylation site occupancy during mitosis.</title>
        <authorList>
            <person name="Olsen J.V."/>
            <person name="Vermeulen M."/>
            <person name="Santamaria A."/>
            <person name="Kumar C."/>
            <person name="Miller M.L."/>
            <person name="Jensen L.J."/>
            <person name="Gnad F."/>
            <person name="Cox J."/>
            <person name="Jensen T.S."/>
            <person name="Nigg E.A."/>
            <person name="Brunak S."/>
            <person name="Mann M."/>
        </authorList>
    </citation>
    <scope>PHOSPHORYLATION [LARGE SCALE ANALYSIS] AT SER-661 AND SER-687</scope>
    <scope>IDENTIFICATION BY MASS SPECTROMETRY [LARGE SCALE ANALYSIS]</scope>
    <source>
        <tissue>Cervix carcinoma</tissue>
    </source>
</reference>
<reference key="15">
    <citation type="journal article" date="2013" name="J. Proteome Res.">
        <title>Toward a comprehensive characterization of a human cancer cell phosphoproteome.</title>
        <authorList>
            <person name="Zhou H."/>
            <person name="Di Palma S."/>
            <person name="Preisinger C."/>
            <person name="Peng M."/>
            <person name="Polat A.N."/>
            <person name="Heck A.J."/>
            <person name="Mohammed S."/>
        </authorList>
    </citation>
    <scope>PHOSPHORYLATION [LARGE SCALE ANALYSIS] AT SER-658; SER-678 AND SER-687</scope>
    <scope>IDENTIFICATION BY MASS SPECTROMETRY [LARGE SCALE ANALYSIS]</scope>
    <source>
        <tissue>Cervix carcinoma</tissue>
        <tissue>Erythroleukemia</tissue>
    </source>
</reference>
<reference key="16">
    <citation type="journal article" date="2014" name="J. Proteomics">
        <title>An enzyme assisted RP-RPLC approach for in-depth analysis of human liver phosphoproteome.</title>
        <authorList>
            <person name="Bian Y."/>
            <person name="Song C."/>
            <person name="Cheng K."/>
            <person name="Dong M."/>
            <person name="Wang F."/>
            <person name="Huang J."/>
            <person name="Sun D."/>
            <person name="Wang L."/>
            <person name="Ye M."/>
            <person name="Zou H."/>
        </authorList>
    </citation>
    <scope>PHOSPHORYLATION [LARGE SCALE ANALYSIS] AT SER-22; SER-678 AND SER-687</scope>
    <scope>IDENTIFICATION BY MASS SPECTROMETRY [LARGE SCALE ANALYSIS]</scope>
    <source>
        <tissue>Liver</tissue>
    </source>
</reference>
<reference key="17">
    <citation type="journal article" date="2015" name="Proteomics">
        <title>N-terminome analysis of the human mitochondrial proteome.</title>
        <authorList>
            <person name="Vaca Jacome A.S."/>
            <person name="Rabilloud T."/>
            <person name="Schaeffer-Reiss C."/>
            <person name="Rompais M."/>
            <person name="Ayoub D."/>
            <person name="Lane L."/>
            <person name="Bairoch A."/>
            <person name="Van Dorsselaer A."/>
            <person name="Carapito C."/>
        </authorList>
    </citation>
    <scope>IDENTIFICATION BY MASS SPECTROMETRY [LARGE SCALE ANALYSIS]</scope>
</reference>
<sequence length="808" mass="87199">METGTAPLVAPPRRHGAPAAPSPPPRGSRAGPVVVVAPGPPVTTATSAPVTLVAPGEARPAWVPGSAETSAPAPAPAPAPAPAVTGSTVVVLTLEASPEAPKPQLPSGPESPEPAAVAGVETSRALAAGADSPKTEEARPSPAPGPGTPTGTPTRTPSRTAPGALTAKPPLAPKPGTTVASGVTARSASGQVTGGHGAAAATSASAGQAPEDPSGPGTGPSGTCEAPVAVVTVTPAPEPAENSQDLGSTSSLGPGISGPRGQAPDTLSYLDSVSLMSGTLESLADDVSSMGSDSEINGLALRKTDKYGFLGGSQYSGSLESSIPVDVARQRELKWLDMFSNWDKWLSRRFQKVKLRCRKGIPSSLRAKAWQYLSNSKELLEQNPGKFEELERAPGDPKWLDVIEKDLHRQFPFHEMFAARGGHGQQDLYRILKAYTIYRPDEGYCQAQAPVAAVLLMHMPAEQAFWCLVQICDKYLPGYYSAGLEAIQLDGEIFFALLRRASPLAHRHLRRQRIDPVLYMTEWFMCIFARTLPWASVLRVWDMFFCEGVKIIFRVALVLLRHTLGSVEKLRSCQGMYETMEQLRNLPQQCMQEDFLVHEVTNLPVTEALIERENAAQLKKWRETRGELQYRPSRRLHGSRAIHEERRRQQPPLGPSSSLLSLPGLKSRGSRAAGGAPSPPPPVRRASAGPAPGPVVTAEGLHPSLPSPTGNSTPLGSSKETRKQEKERQKQEKERQKQEKEREKERQKQEKEREKQEKEREKQEKERQKQEKKAQGRKLSLRRKADGPPGPHDGGDRPSAEARQDAYF</sequence>
<gene>
    <name type="primary">TBC1D10B</name>
    <name type="ORF">FP2461</name>
</gene>